<name>FABH_CLOPE</name>
<comment type="function">
    <text evidence="1">Catalyzes the condensation reaction of fatty acid synthesis by the addition to an acyl acceptor of two carbons from malonyl-ACP. Catalyzes the first condensation reaction which initiates fatty acid synthesis and may therefore play a role in governing the total rate of fatty acid production. Possesses both acetoacetyl-ACP synthase and acetyl transacylase activities. Its substrate specificity determines the biosynthesis of branched-chain and/or straight-chain of fatty acids.</text>
</comment>
<comment type="catalytic activity">
    <reaction evidence="1">
        <text>malonyl-[ACP] + acetyl-CoA + H(+) = 3-oxobutanoyl-[ACP] + CO2 + CoA</text>
        <dbReference type="Rhea" id="RHEA:12080"/>
        <dbReference type="Rhea" id="RHEA-COMP:9623"/>
        <dbReference type="Rhea" id="RHEA-COMP:9625"/>
        <dbReference type="ChEBI" id="CHEBI:15378"/>
        <dbReference type="ChEBI" id="CHEBI:16526"/>
        <dbReference type="ChEBI" id="CHEBI:57287"/>
        <dbReference type="ChEBI" id="CHEBI:57288"/>
        <dbReference type="ChEBI" id="CHEBI:78449"/>
        <dbReference type="ChEBI" id="CHEBI:78450"/>
        <dbReference type="EC" id="2.3.1.180"/>
    </reaction>
</comment>
<comment type="pathway">
    <text evidence="1">Lipid metabolism; fatty acid biosynthesis.</text>
</comment>
<comment type="subunit">
    <text evidence="1">Homodimer.</text>
</comment>
<comment type="subcellular location">
    <subcellularLocation>
        <location evidence="1">Cytoplasm</location>
    </subcellularLocation>
</comment>
<comment type="domain">
    <text evidence="1">The last Arg residue of the ACP-binding site is essential for the weak association between ACP/AcpP and FabH.</text>
</comment>
<comment type="similarity">
    <text evidence="1">Belongs to the thiolase-like superfamily. FabH family.</text>
</comment>
<protein>
    <recommendedName>
        <fullName evidence="1">Beta-ketoacyl-[acyl-carrier-protein] synthase III</fullName>
        <shortName evidence="1">Beta-ketoacyl-ACP synthase III</shortName>
        <shortName evidence="1">KAS III</shortName>
        <ecNumber evidence="1">2.3.1.180</ecNumber>
    </recommendedName>
    <alternativeName>
        <fullName evidence="1">3-oxoacyl-[acyl-carrier-protein] synthase 3</fullName>
    </alternativeName>
    <alternativeName>
        <fullName evidence="1">3-oxoacyl-[acyl-carrier-protein] synthase III</fullName>
    </alternativeName>
</protein>
<organism>
    <name type="scientific">Clostridium perfringens (strain 13 / Type A)</name>
    <dbReference type="NCBI Taxonomy" id="195102"/>
    <lineage>
        <taxon>Bacteria</taxon>
        <taxon>Bacillati</taxon>
        <taxon>Bacillota</taxon>
        <taxon>Clostridia</taxon>
        <taxon>Eubacteriales</taxon>
        <taxon>Clostridiaceae</taxon>
        <taxon>Clostridium</taxon>
    </lineage>
</organism>
<reference key="1">
    <citation type="journal article" date="2002" name="Proc. Natl. Acad. Sci. U.S.A.">
        <title>Complete genome sequence of Clostridium perfringens, an anaerobic flesh-eater.</title>
        <authorList>
            <person name="Shimizu T."/>
            <person name="Ohtani K."/>
            <person name="Hirakawa H."/>
            <person name="Ohshima K."/>
            <person name="Yamashita A."/>
            <person name="Shiba T."/>
            <person name="Ogasawara N."/>
            <person name="Hattori M."/>
            <person name="Kuhara S."/>
            <person name="Hayashi H."/>
        </authorList>
    </citation>
    <scope>NUCLEOTIDE SEQUENCE [LARGE SCALE GENOMIC DNA]</scope>
    <source>
        <strain>13 / Type A</strain>
    </source>
</reference>
<dbReference type="EC" id="2.3.1.180" evidence="1"/>
<dbReference type="EMBL" id="BA000016">
    <property type="protein sequence ID" value="BAB80774.1"/>
    <property type="molecule type" value="Genomic_DNA"/>
</dbReference>
<dbReference type="RefSeq" id="WP_003458537.1">
    <property type="nucleotide sequence ID" value="NC_003366.1"/>
</dbReference>
<dbReference type="SMR" id="Q8XLH3"/>
<dbReference type="STRING" id="195102.gene:10490331"/>
<dbReference type="KEGG" id="cpe:CPE1068"/>
<dbReference type="HOGENOM" id="CLU_039592_3_1_9"/>
<dbReference type="UniPathway" id="UPA00094"/>
<dbReference type="Proteomes" id="UP000000818">
    <property type="component" value="Chromosome"/>
</dbReference>
<dbReference type="GO" id="GO:0005737">
    <property type="term" value="C:cytoplasm"/>
    <property type="evidence" value="ECO:0007669"/>
    <property type="project" value="UniProtKB-SubCell"/>
</dbReference>
<dbReference type="GO" id="GO:0004315">
    <property type="term" value="F:3-oxoacyl-[acyl-carrier-protein] synthase activity"/>
    <property type="evidence" value="ECO:0007669"/>
    <property type="project" value="InterPro"/>
</dbReference>
<dbReference type="GO" id="GO:0033818">
    <property type="term" value="F:beta-ketoacyl-acyl-carrier-protein synthase III activity"/>
    <property type="evidence" value="ECO:0007669"/>
    <property type="project" value="UniProtKB-UniRule"/>
</dbReference>
<dbReference type="GO" id="GO:0006633">
    <property type="term" value="P:fatty acid biosynthetic process"/>
    <property type="evidence" value="ECO:0007669"/>
    <property type="project" value="UniProtKB-UniRule"/>
</dbReference>
<dbReference type="CDD" id="cd00830">
    <property type="entry name" value="KAS_III"/>
    <property type="match status" value="1"/>
</dbReference>
<dbReference type="FunFam" id="3.40.47.10:FF:000004">
    <property type="entry name" value="3-oxoacyl-[acyl-carrier-protein] synthase 3"/>
    <property type="match status" value="1"/>
</dbReference>
<dbReference type="Gene3D" id="3.40.47.10">
    <property type="match status" value="1"/>
</dbReference>
<dbReference type="HAMAP" id="MF_01815">
    <property type="entry name" value="FabH"/>
    <property type="match status" value="1"/>
</dbReference>
<dbReference type="InterPro" id="IPR013747">
    <property type="entry name" value="ACP_syn_III_C"/>
</dbReference>
<dbReference type="InterPro" id="IPR013751">
    <property type="entry name" value="ACP_syn_III_N"/>
</dbReference>
<dbReference type="InterPro" id="IPR004655">
    <property type="entry name" value="FabH"/>
</dbReference>
<dbReference type="InterPro" id="IPR016039">
    <property type="entry name" value="Thiolase-like"/>
</dbReference>
<dbReference type="NCBIfam" id="TIGR00747">
    <property type="entry name" value="fabH"/>
    <property type="match status" value="1"/>
</dbReference>
<dbReference type="NCBIfam" id="NF006829">
    <property type="entry name" value="PRK09352.1"/>
    <property type="match status" value="1"/>
</dbReference>
<dbReference type="PANTHER" id="PTHR43091">
    <property type="entry name" value="3-OXOACYL-[ACYL-CARRIER-PROTEIN] SYNTHASE"/>
    <property type="match status" value="1"/>
</dbReference>
<dbReference type="PANTHER" id="PTHR43091:SF1">
    <property type="entry name" value="BETA-KETOACYL-[ACYL-CARRIER-PROTEIN] SYNTHASE III, CHLOROPLASTIC"/>
    <property type="match status" value="1"/>
</dbReference>
<dbReference type="Pfam" id="PF08545">
    <property type="entry name" value="ACP_syn_III"/>
    <property type="match status" value="1"/>
</dbReference>
<dbReference type="Pfam" id="PF08541">
    <property type="entry name" value="ACP_syn_III_C"/>
    <property type="match status" value="1"/>
</dbReference>
<dbReference type="SUPFAM" id="SSF53901">
    <property type="entry name" value="Thiolase-like"/>
    <property type="match status" value="1"/>
</dbReference>
<evidence type="ECO:0000255" key="1">
    <source>
        <dbReference type="HAMAP-Rule" id="MF_01815"/>
    </source>
</evidence>
<keyword id="KW-0012">Acyltransferase</keyword>
<keyword id="KW-0963">Cytoplasm</keyword>
<keyword id="KW-0275">Fatty acid biosynthesis</keyword>
<keyword id="KW-0276">Fatty acid metabolism</keyword>
<keyword id="KW-0444">Lipid biosynthesis</keyword>
<keyword id="KW-0443">Lipid metabolism</keyword>
<keyword id="KW-0511">Multifunctional enzyme</keyword>
<keyword id="KW-1185">Reference proteome</keyword>
<keyword id="KW-0808">Transferase</keyword>
<accession>Q8XLH3</accession>
<gene>
    <name evidence="1" type="primary">fabH</name>
    <name type="ordered locus">CPE1068</name>
</gene>
<sequence length="324" mass="35342">MKNAKMIGFGLYTPKNLVENERLQEFLETSDEWIRTRTGIERRYISLDENTSDLAVEASKKALSQARLSAEEIDLIIVATVTPDNFTPSTACIVQDKLGAKNAWAFDINAACTGFIYALKLGRSLIRSGEANNALIIGAETLSKALNWEDRGSCVLFGDGAGATVLTSTEEDCGIKCVNVKSDGSKGDSLVIQGLPLNSPFKDGREVSENYINMNGREIFKFATKVMEESIVEILEKENIKIEDIAAIIPHQANLRIIDYVVKRLGIPREKFITNLQNYGNTSGASIPIALCESIDEGNLKKGDNIIMVGFGGGLTWGAALIKL</sequence>
<proteinExistence type="inferred from homology"/>
<feature type="chain" id="PRO_0000110419" description="Beta-ketoacyl-[acyl-carrier-protein] synthase III">
    <location>
        <begin position="1"/>
        <end position="324"/>
    </location>
</feature>
<feature type="region of interest" description="ACP-binding" evidence="1">
    <location>
        <begin position="252"/>
        <end position="256"/>
    </location>
</feature>
<feature type="active site" evidence="1">
    <location>
        <position position="112"/>
    </location>
</feature>
<feature type="active site" evidence="1">
    <location>
        <position position="251"/>
    </location>
</feature>
<feature type="active site" evidence="1">
    <location>
        <position position="281"/>
    </location>
</feature>